<sequence>MYMPLALVYASFLTLPASTSPATKGNVIQIQVHNIVNLAQTTVAHIRKLRMQLLMAPPIEITTPPIKGLASFSHYLKHLDNELQSPDTDLLSQIQADVSSLDGKVQSLGLMMNCPFQPRPTAEVSRFLFPDIHHYWTIAKVENYLESLHLNRDKLKVC</sequence>
<organism>
    <name type="scientific">Oryzias latipes</name>
    <name type="common">Japanese rice fish</name>
    <name type="synonym">Japanese killifish</name>
    <dbReference type="NCBI Taxonomy" id="8090"/>
    <lineage>
        <taxon>Eukaryota</taxon>
        <taxon>Metazoa</taxon>
        <taxon>Chordata</taxon>
        <taxon>Craniata</taxon>
        <taxon>Vertebrata</taxon>
        <taxon>Euteleostomi</taxon>
        <taxon>Actinopterygii</taxon>
        <taxon>Neopterygii</taxon>
        <taxon>Teleostei</taxon>
        <taxon>Neoteleostei</taxon>
        <taxon>Acanthomorphata</taxon>
        <taxon>Ovalentaria</taxon>
        <taxon>Atherinomorphae</taxon>
        <taxon>Beloniformes</taxon>
        <taxon>Adrianichthyidae</taxon>
        <taxon>Oryziinae</taxon>
        <taxon>Oryzias</taxon>
    </lineage>
</organism>
<protein>
    <recommendedName>
        <fullName evidence="5">Leptin-B</fullName>
    </recommendedName>
</protein>
<proteinExistence type="evidence at transcript level"/>
<name>LEPB_ORYLA</name>
<gene>
    <name evidence="5" type="primary">LEP-B</name>
    <name evidence="6" type="synonym">ob-b</name>
</gene>
<dbReference type="EMBL" id="AB457589">
    <property type="protein sequence ID" value="BAH24202.2"/>
    <property type="molecule type" value="mRNA"/>
</dbReference>
<dbReference type="EMBL" id="BN001183">
    <property type="protein sequence ID" value="CAP45848.1"/>
    <property type="molecule type" value="mRNA"/>
</dbReference>
<dbReference type="RefSeq" id="NP_001153914.1">
    <property type="nucleotide sequence ID" value="NM_001160442.2"/>
</dbReference>
<dbReference type="SMR" id="B9X0L5"/>
<dbReference type="STRING" id="8090.ENSORLP00000037008"/>
<dbReference type="Ensembl" id="ENSORLT00000027678.1">
    <property type="protein sequence ID" value="ENSORLP00000037008.1"/>
    <property type="gene ID" value="ENSORLG00000021942.1"/>
</dbReference>
<dbReference type="GeneID" id="100301595"/>
<dbReference type="KEGG" id="ola:100301595"/>
<dbReference type="CTD" id="100301595"/>
<dbReference type="GeneTree" id="ENSGT01030000234865"/>
<dbReference type="InParanoid" id="B9X0L5"/>
<dbReference type="OrthoDB" id="9872512at2759"/>
<dbReference type="Proteomes" id="UP000001038">
    <property type="component" value="Chromosome 23"/>
</dbReference>
<dbReference type="Proteomes" id="UP000265180">
    <property type="component" value="Unplaced"/>
</dbReference>
<dbReference type="Proteomes" id="UP000265200">
    <property type="component" value="Unplaced"/>
</dbReference>
<dbReference type="Bgee" id="ENSORLG00000021942">
    <property type="expression patterns" value="Expressed in pharyngeal gill and 2 other cell types or tissues"/>
</dbReference>
<dbReference type="GO" id="GO:0005576">
    <property type="term" value="C:extracellular region"/>
    <property type="evidence" value="ECO:0007669"/>
    <property type="project" value="UniProtKB-SubCell"/>
</dbReference>
<dbReference type="Gene3D" id="1.20.1250.10">
    <property type="match status" value="1"/>
</dbReference>
<dbReference type="InterPro" id="IPR009079">
    <property type="entry name" value="4_helix_cytokine-like_core"/>
</dbReference>
<dbReference type="SUPFAM" id="SSF47266">
    <property type="entry name" value="4-helical cytokines"/>
    <property type="match status" value="1"/>
</dbReference>
<keyword id="KW-1015">Disulfide bond</keyword>
<keyword id="KW-1185">Reference proteome</keyword>
<keyword id="KW-0964">Secreted</keyword>
<keyword id="KW-0732">Signal</keyword>
<accession>B9X0L5</accession>
<comment type="function">
    <text evidence="2">May function as part of a signaling pathway that acts to regulate the size of the body fat depot.</text>
</comment>
<comment type="subcellular location">
    <subcellularLocation>
        <location evidence="2">Secreted</location>
    </subcellularLocation>
</comment>
<comment type="tissue specificity">
    <text evidence="4">Highly expressed in the brain and eye. Expressed at low levels in muscle and skin.</text>
</comment>
<comment type="similarity">
    <text evidence="3">Belongs to the leptin family.</text>
</comment>
<evidence type="ECO:0000250" key="1"/>
<evidence type="ECO:0000250" key="2">
    <source>
        <dbReference type="UniProtKB" id="P41159"/>
    </source>
</evidence>
<evidence type="ECO:0000255" key="3"/>
<evidence type="ECO:0000269" key="4">
    <source>
    </source>
</evidence>
<evidence type="ECO:0000312" key="5">
    <source>
        <dbReference type="EMBL" id="BAH24202.2"/>
    </source>
</evidence>
<evidence type="ECO:0000312" key="6">
    <source>
        <dbReference type="EMBL" id="CAP45848.1"/>
    </source>
</evidence>
<feature type="signal peptide" evidence="3">
    <location>
        <begin position="1"/>
        <end position="19"/>
    </location>
</feature>
<feature type="chain" id="PRO_0000412718" description="Leptin-B" evidence="3">
    <location>
        <begin position="20"/>
        <end position="158"/>
    </location>
</feature>
<feature type="disulfide bond" evidence="1">
    <location>
        <begin position="114"/>
        <end position="158"/>
    </location>
</feature>
<reference evidence="5" key="1">
    <citation type="journal article" date="2009" name="Gen. Comp. Endocrinol.">
        <title>Genomic characterization of multiple leptin genes and a leptin receptor gene in the Japanese medaka, Oryzias latipes.</title>
        <authorList>
            <person name="Kurokawa T."/>
            <person name="Murashita K."/>
        </authorList>
    </citation>
    <scope>NUCLEOTIDE SEQUENCE [MRNA]</scope>
    <scope>TISSUE SPECIFICITY</scope>
    <source>
        <tissue evidence="5">Brain</tissue>
    </source>
</reference>
<reference evidence="6" key="2">
    <citation type="journal article" date="2009" name="J. Endocrinol.">
        <title>Two divergent leptin paralogues in zebrafish (Danio rerio) that originate early in teleostean evolution.</title>
        <authorList>
            <person name="Gorissen M."/>
            <person name="Bernier N.J."/>
            <person name="Nabuurs S.B."/>
            <person name="Flik G."/>
            <person name="Huising M.O."/>
        </authorList>
    </citation>
    <scope>NUCLEOTIDE SEQUENCE [MRNA]</scope>
</reference>